<proteinExistence type="evidence at protein level"/>
<sequence>VATVDCSDYPKPACTMEYMPLCGSDNKTYGNKCNFCNAVVDSNGTLTLSHFGKC</sequence>
<reference key="1">
    <citation type="journal article" date="1987" name="Biochemistry">
        <title>Ovomucoid third domains from 100 avian species: isolation, sequences, and hypervariability of enzyme-inhibitor contact residues.</title>
        <authorList>
            <person name="Laskowski M. Jr."/>
            <person name="Kato I."/>
            <person name="Ardelt W."/>
            <person name="Cook J."/>
            <person name="Denton A."/>
            <person name="Empie M.W."/>
            <person name="Kohr W.J."/>
            <person name="Park S.J."/>
            <person name="Parks K."/>
            <person name="Schatzley B.L."/>
            <person name="Schoenberger O.L."/>
            <person name="Tashiro M."/>
            <person name="Vichot G."/>
            <person name="Whatley H.E."/>
            <person name="Wieczorek A."/>
            <person name="Wieczorek M."/>
        </authorList>
    </citation>
    <scope>PROTEIN SEQUENCE</scope>
</reference>
<comment type="subcellular location">
    <subcellularLocation>
        <location>Secreted</location>
    </subcellularLocation>
</comment>
<comment type="domain">
    <text>Avian ovomucoid consists of three homologous, tandem Kazal family inhibitory domains.</text>
</comment>
<accession>P68129</accession>
<accession>P05572</accession>
<feature type="chain" id="PRO_0000073096" description="Ovomucoid">
    <location>
        <begin position="1" status="less than"/>
        <end position="54" status="greater than"/>
    </location>
</feature>
<feature type="domain" description="Kazal-like" evidence="1">
    <location>
        <begin position="4"/>
        <end position="54"/>
    </location>
</feature>
<feature type="site" description="Reactive bond 3">
    <location>
        <begin position="16"/>
        <end position="17"/>
    </location>
</feature>
<feature type="glycosylation site" description="N-linked (GlcNAc...) asparagine">
    <location>
        <position position="43"/>
    </location>
</feature>
<feature type="disulfide bond">
    <location>
        <begin position="6"/>
        <end position="36"/>
    </location>
</feature>
<feature type="disulfide bond">
    <location>
        <begin position="14"/>
        <end position="33"/>
    </location>
</feature>
<feature type="disulfide bond">
    <location>
        <begin position="22"/>
        <end position="54"/>
    </location>
</feature>
<feature type="non-terminal residue">
    <location>
        <position position="1"/>
    </location>
</feature>
<feature type="non-terminal residue">
    <location>
        <position position="54"/>
    </location>
</feature>
<evidence type="ECO:0000255" key="1">
    <source>
        <dbReference type="PROSITE-ProRule" id="PRU00798"/>
    </source>
</evidence>
<dbReference type="PIR" id="B31446">
    <property type="entry name" value="B31446"/>
</dbReference>
<dbReference type="SMR" id="P68129"/>
<dbReference type="GO" id="GO:0005576">
    <property type="term" value="C:extracellular region"/>
    <property type="evidence" value="ECO:0007669"/>
    <property type="project" value="UniProtKB-SubCell"/>
</dbReference>
<dbReference type="GO" id="GO:0004867">
    <property type="term" value="F:serine-type endopeptidase inhibitor activity"/>
    <property type="evidence" value="ECO:0007669"/>
    <property type="project" value="UniProtKB-KW"/>
</dbReference>
<dbReference type="CDD" id="cd00104">
    <property type="entry name" value="KAZAL_FS"/>
    <property type="match status" value="1"/>
</dbReference>
<dbReference type="FunFam" id="3.30.60.30:FF:000037">
    <property type="entry name" value="Ovomucoid"/>
    <property type="match status" value="1"/>
</dbReference>
<dbReference type="Gene3D" id="3.30.60.30">
    <property type="match status" value="1"/>
</dbReference>
<dbReference type="InterPro" id="IPR051597">
    <property type="entry name" value="Bifunctional_prot_inhibitor"/>
</dbReference>
<dbReference type="InterPro" id="IPR002350">
    <property type="entry name" value="Kazal_dom"/>
</dbReference>
<dbReference type="InterPro" id="IPR036058">
    <property type="entry name" value="Kazal_dom_sf"/>
</dbReference>
<dbReference type="InterPro" id="IPR001239">
    <property type="entry name" value="Prot_inh_Kazal-m"/>
</dbReference>
<dbReference type="PANTHER" id="PTHR47729:SF1">
    <property type="entry name" value="OVOMUCOID-LIKE-RELATED"/>
    <property type="match status" value="1"/>
</dbReference>
<dbReference type="PANTHER" id="PTHR47729">
    <property type="entry name" value="SERINE PEPTIDASE INHIBITOR, KAZAL TYPE 2, TANDEM DUPLICATE 1-RELATED"/>
    <property type="match status" value="1"/>
</dbReference>
<dbReference type="Pfam" id="PF00050">
    <property type="entry name" value="Kazal_1"/>
    <property type="match status" value="1"/>
</dbReference>
<dbReference type="PRINTS" id="PR00290">
    <property type="entry name" value="KAZALINHBTR"/>
</dbReference>
<dbReference type="SMART" id="SM00280">
    <property type="entry name" value="KAZAL"/>
    <property type="match status" value="1"/>
</dbReference>
<dbReference type="SUPFAM" id="SSF100895">
    <property type="entry name" value="Kazal-type serine protease inhibitors"/>
    <property type="match status" value="1"/>
</dbReference>
<dbReference type="PROSITE" id="PS00282">
    <property type="entry name" value="KAZAL_1"/>
    <property type="match status" value="1"/>
</dbReference>
<dbReference type="PROSITE" id="PS51465">
    <property type="entry name" value="KAZAL_2"/>
    <property type="match status" value="1"/>
</dbReference>
<protein>
    <recommendedName>
        <fullName>Ovomucoid</fullName>
    </recommendedName>
</protein>
<organism>
    <name type="scientific">Cygnus atratus</name>
    <name type="common">Black swan</name>
    <name type="synonym">Anas atrata</name>
    <dbReference type="NCBI Taxonomy" id="8868"/>
    <lineage>
        <taxon>Eukaryota</taxon>
        <taxon>Metazoa</taxon>
        <taxon>Chordata</taxon>
        <taxon>Craniata</taxon>
        <taxon>Vertebrata</taxon>
        <taxon>Euteleostomi</taxon>
        <taxon>Archelosauria</taxon>
        <taxon>Archosauria</taxon>
        <taxon>Dinosauria</taxon>
        <taxon>Saurischia</taxon>
        <taxon>Theropoda</taxon>
        <taxon>Coelurosauria</taxon>
        <taxon>Aves</taxon>
        <taxon>Neognathae</taxon>
        <taxon>Galloanserae</taxon>
        <taxon>Anseriformes</taxon>
        <taxon>Anatidae</taxon>
        <taxon>Anserinae</taxon>
        <taxon>Cygnus</taxon>
    </lineage>
</organism>
<name>IOVO_CYGAT</name>
<keyword id="KW-0903">Direct protein sequencing</keyword>
<keyword id="KW-1015">Disulfide bond</keyword>
<keyword id="KW-0325">Glycoprotein</keyword>
<keyword id="KW-0646">Protease inhibitor</keyword>
<keyword id="KW-0677">Repeat</keyword>
<keyword id="KW-0964">Secreted</keyword>
<keyword id="KW-0722">Serine protease inhibitor</keyword>